<sequence length="202" mass="22953">MARYRGPRLRITRRLGDLPGLTRKAAKRSYPPGQHGQARRKRSEYAIRLEEKQKLRFNYGVSERQLVRYVKKARAQEGSTGTNLLKLLENRLDNVCFRLGFGPTVPGARQLVNHGHVTVNGRVTDIASYQCKPGDVVAIRERKCSKQLAEGNLEFPGLANVPTHLELDKAKLSAKVTGRCEREWVALEINELLVVEYYSRKV</sequence>
<gene>
    <name evidence="1" type="primary">rpsD</name>
    <name evidence="1" type="synonym">rps4</name>
    <name type="ordered locus">SYNW1694</name>
</gene>
<dbReference type="EMBL" id="BX569693">
    <property type="protein sequence ID" value="CAE08209.1"/>
    <property type="molecule type" value="Genomic_DNA"/>
</dbReference>
<dbReference type="RefSeq" id="WP_011128556.1">
    <property type="nucleotide sequence ID" value="NC_005070.1"/>
</dbReference>
<dbReference type="SMR" id="Q7U5K9"/>
<dbReference type="STRING" id="84588.SYNW1694"/>
<dbReference type="KEGG" id="syw:SYNW1694"/>
<dbReference type="eggNOG" id="COG0522">
    <property type="taxonomic scope" value="Bacteria"/>
</dbReference>
<dbReference type="HOGENOM" id="CLU_092403_0_5_3"/>
<dbReference type="Proteomes" id="UP000001422">
    <property type="component" value="Chromosome"/>
</dbReference>
<dbReference type="GO" id="GO:0015935">
    <property type="term" value="C:small ribosomal subunit"/>
    <property type="evidence" value="ECO:0007669"/>
    <property type="project" value="InterPro"/>
</dbReference>
<dbReference type="GO" id="GO:0019843">
    <property type="term" value="F:rRNA binding"/>
    <property type="evidence" value="ECO:0007669"/>
    <property type="project" value="UniProtKB-UniRule"/>
</dbReference>
<dbReference type="GO" id="GO:0003735">
    <property type="term" value="F:structural constituent of ribosome"/>
    <property type="evidence" value="ECO:0007669"/>
    <property type="project" value="InterPro"/>
</dbReference>
<dbReference type="GO" id="GO:0042274">
    <property type="term" value="P:ribosomal small subunit biogenesis"/>
    <property type="evidence" value="ECO:0007669"/>
    <property type="project" value="TreeGrafter"/>
</dbReference>
<dbReference type="GO" id="GO:0006412">
    <property type="term" value="P:translation"/>
    <property type="evidence" value="ECO:0007669"/>
    <property type="project" value="UniProtKB-UniRule"/>
</dbReference>
<dbReference type="CDD" id="cd00165">
    <property type="entry name" value="S4"/>
    <property type="match status" value="1"/>
</dbReference>
<dbReference type="FunFam" id="3.10.290.10:FF:000001">
    <property type="entry name" value="30S ribosomal protein S4"/>
    <property type="match status" value="1"/>
</dbReference>
<dbReference type="FunFam" id="1.10.1050.10:FF:000002">
    <property type="entry name" value="30S ribosomal protein S4, chloroplastic"/>
    <property type="match status" value="1"/>
</dbReference>
<dbReference type="Gene3D" id="1.10.1050.10">
    <property type="entry name" value="Ribosomal Protein S4 Delta 41, Chain A, domain 1"/>
    <property type="match status" value="1"/>
</dbReference>
<dbReference type="Gene3D" id="3.10.290.10">
    <property type="entry name" value="RNA-binding S4 domain"/>
    <property type="match status" value="1"/>
</dbReference>
<dbReference type="HAMAP" id="MF_01306_B">
    <property type="entry name" value="Ribosomal_uS4_B"/>
    <property type="match status" value="1"/>
</dbReference>
<dbReference type="InterPro" id="IPR022801">
    <property type="entry name" value="Ribosomal_uS4"/>
</dbReference>
<dbReference type="InterPro" id="IPR005709">
    <property type="entry name" value="Ribosomal_uS4_bac-type"/>
</dbReference>
<dbReference type="InterPro" id="IPR018079">
    <property type="entry name" value="Ribosomal_uS4_CS"/>
</dbReference>
<dbReference type="InterPro" id="IPR001912">
    <property type="entry name" value="Ribosomal_uS4_N"/>
</dbReference>
<dbReference type="InterPro" id="IPR002942">
    <property type="entry name" value="S4_RNA-bd"/>
</dbReference>
<dbReference type="InterPro" id="IPR036986">
    <property type="entry name" value="S4_RNA-bd_sf"/>
</dbReference>
<dbReference type="NCBIfam" id="NF003717">
    <property type="entry name" value="PRK05327.1"/>
    <property type="match status" value="1"/>
</dbReference>
<dbReference type="NCBIfam" id="TIGR01017">
    <property type="entry name" value="rpsD_bact"/>
    <property type="match status" value="1"/>
</dbReference>
<dbReference type="PANTHER" id="PTHR11831">
    <property type="entry name" value="30S 40S RIBOSOMAL PROTEIN"/>
    <property type="match status" value="1"/>
</dbReference>
<dbReference type="PANTHER" id="PTHR11831:SF4">
    <property type="entry name" value="SMALL RIBOSOMAL SUBUNIT PROTEIN US4M"/>
    <property type="match status" value="1"/>
</dbReference>
<dbReference type="Pfam" id="PF00163">
    <property type="entry name" value="Ribosomal_S4"/>
    <property type="match status" value="1"/>
</dbReference>
<dbReference type="Pfam" id="PF01479">
    <property type="entry name" value="S4"/>
    <property type="match status" value="1"/>
</dbReference>
<dbReference type="SMART" id="SM01390">
    <property type="entry name" value="Ribosomal_S4"/>
    <property type="match status" value="1"/>
</dbReference>
<dbReference type="SMART" id="SM00363">
    <property type="entry name" value="S4"/>
    <property type="match status" value="1"/>
</dbReference>
<dbReference type="SUPFAM" id="SSF55174">
    <property type="entry name" value="Alpha-L RNA-binding motif"/>
    <property type="match status" value="1"/>
</dbReference>
<dbReference type="PROSITE" id="PS00632">
    <property type="entry name" value="RIBOSOMAL_S4"/>
    <property type="match status" value="1"/>
</dbReference>
<dbReference type="PROSITE" id="PS50889">
    <property type="entry name" value="S4"/>
    <property type="match status" value="1"/>
</dbReference>
<proteinExistence type="inferred from homology"/>
<keyword id="KW-0687">Ribonucleoprotein</keyword>
<keyword id="KW-0689">Ribosomal protein</keyword>
<keyword id="KW-0694">RNA-binding</keyword>
<keyword id="KW-0699">rRNA-binding</keyword>
<evidence type="ECO:0000255" key="1">
    <source>
        <dbReference type="HAMAP-Rule" id="MF_01306"/>
    </source>
</evidence>
<evidence type="ECO:0000256" key="2">
    <source>
        <dbReference type="SAM" id="MobiDB-lite"/>
    </source>
</evidence>
<evidence type="ECO:0000305" key="3"/>
<reference key="1">
    <citation type="journal article" date="2003" name="Nature">
        <title>The genome of a motile marine Synechococcus.</title>
        <authorList>
            <person name="Palenik B."/>
            <person name="Brahamsha B."/>
            <person name="Larimer F.W."/>
            <person name="Land M.L."/>
            <person name="Hauser L."/>
            <person name="Chain P."/>
            <person name="Lamerdin J.E."/>
            <person name="Regala W."/>
            <person name="Allen E.E."/>
            <person name="McCarren J."/>
            <person name="Paulsen I.T."/>
            <person name="Dufresne A."/>
            <person name="Partensky F."/>
            <person name="Webb E.A."/>
            <person name="Waterbury J."/>
        </authorList>
    </citation>
    <scope>NUCLEOTIDE SEQUENCE [LARGE SCALE GENOMIC DNA]</scope>
    <source>
        <strain>WH8102</strain>
    </source>
</reference>
<name>RS4_PARMW</name>
<accession>Q7U5K9</accession>
<comment type="function">
    <text evidence="1">One of the primary rRNA binding proteins, it binds directly to 16S rRNA where it nucleates assembly of the body of the 30S subunit.</text>
</comment>
<comment type="function">
    <text evidence="1">With S5 and S12 plays an important role in translational accuracy.</text>
</comment>
<comment type="subunit">
    <text evidence="1">Part of the 30S ribosomal subunit. Contacts protein S5. The interaction surface between S4 and S5 is involved in control of translational fidelity.</text>
</comment>
<comment type="similarity">
    <text evidence="1">Belongs to the universal ribosomal protein uS4 family.</text>
</comment>
<feature type="chain" id="PRO_0000132479" description="Small ribosomal subunit protein uS4">
    <location>
        <begin position="1"/>
        <end position="202"/>
    </location>
</feature>
<feature type="domain" description="S4 RNA-binding" evidence="1">
    <location>
        <begin position="90"/>
        <end position="152"/>
    </location>
</feature>
<feature type="region of interest" description="Disordered" evidence="2">
    <location>
        <begin position="15"/>
        <end position="42"/>
    </location>
</feature>
<protein>
    <recommendedName>
        <fullName evidence="1">Small ribosomal subunit protein uS4</fullName>
    </recommendedName>
    <alternativeName>
        <fullName evidence="3">30S ribosomal protein S4</fullName>
    </alternativeName>
</protein>
<organism>
    <name type="scientific">Parasynechococcus marenigrum (strain WH8102)</name>
    <dbReference type="NCBI Taxonomy" id="84588"/>
    <lineage>
        <taxon>Bacteria</taxon>
        <taxon>Bacillati</taxon>
        <taxon>Cyanobacteriota</taxon>
        <taxon>Cyanophyceae</taxon>
        <taxon>Synechococcales</taxon>
        <taxon>Prochlorococcaceae</taxon>
        <taxon>Parasynechococcus</taxon>
        <taxon>Parasynechococcus marenigrum</taxon>
    </lineage>
</organism>